<name>SERC_RUTMC</name>
<protein>
    <recommendedName>
        <fullName evidence="1">Phosphoserine aminotransferase</fullName>
        <ecNumber evidence="1">2.6.1.52</ecNumber>
    </recommendedName>
    <alternativeName>
        <fullName evidence="1">Phosphohydroxythreonine aminotransferase</fullName>
        <shortName evidence="1">PSAT</shortName>
    </alternativeName>
</protein>
<feature type="chain" id="PRO_1000203549" description="Phosphoserine aminotransferase">
    <location>
        <begin position="1"/>
        <end position="359"/>
    </location>
</feature>
<feature type="binding site" evidence="1">
    <location>
        <position position="42"/>
    </location>
    <ligand>
        <name>L-glutamate</name>
        <dbReference type="ChEBI" id="CHEBI:29985"/>
    </ligand>
</feature>
<feature type="binding site" evidence="1">
    <location>
        <begin position="76"/>
        <end position="77"/>
    </location>
    <ligand>
        <name>pyridoxal 5'-phosphate</name>
        <dbReference type="ChEBI" id="CHEBI:597326"/>
    </ligand>
</feature>
<feature type="binding site" evidence="1">
    <location>
        <position position="102"/>
    </location>
    <ligand>
        <name>pyridoxal 5'-phosphate</name>
        <dbReference type="ChEBI" id="CHEBI:597326"/>
    </ligand>
</feature>
<feature type="binding site" evidence="1">
    <location>
        <position position="152"/>
    </location>
    <ligand>
        <name>pyridoxal 5'-phosphate</name>
        <dbReference type="ChEBI" id="CHEBI:597326"/>
    </ligand>
</feature>
<feature type="binding site" evidence="1">
    <location>
        <position position="171"/>
    </location>
    <ligand>
        <name>pyridoxal 5'-phosphate</name>
        <dbReference type="ChEBI" id="CHEBI:597326"/>
    </ligand>
</feature>
<feature type="binding site" evidence="1">
    <location>
        <position position="194"/>
    </location>
    <ligand>
        <name>pyridoxal 5'-phosphate</name>
        <dbReference type="ChEBI" id="CHEBI:597326"/>
    </ligand>
</feature>
<feature type="binding site" evidence="1">
    <location>
        <begin position="236"/>
        <end position="237"/>
    </location>
    <ligand>
        <name>pyridoxal 5'-phosphate</name>
        <dbReference type="ChEBI" id="CHEBI:597326"/>
    </ligand>
</feature>
<feature type="modified residue" description="N6-(pyridoxal phosphate)lysine" evidence="1">
    <location>
        <position position="195"/>
    </location>
</feature>
<evidence type="ECO:0000255" key="1">
    <source>
        <dbReference type="HAMAP-Rule" id="MF_00160"/>
    </source>
</evidence>
<gene>
    <name evidence="1" type="primary">serC</name>
    <name type="ordered locus">Rmag_0628</name>
</gene>
<proteinExistence type="inferred from homology"/>
<accession>A1AWS0</accession>
<comment type="function">
    <text evidence="1">Catalyzes the reversible conversion of 3-phosphohydroxypyruvate to phosphoserine and of 3-hydroxy-2-oxo-4-phosphonooxybutanoate to phosphohydroxythreonine.</text>
</comment>
<comment type="catalytic activity">
    <reaction evidence="1">
        <text>O-phospho-L-serine + 2-oxoglutarate = 3-phosphooxypyruvate + L-glutamate</text>
        <dbReference type="Rhea" id="RHEA:14329"/>
        <dbReference type="ChEBI" id="CHEBI:16810"/>
        <dbReference type="ChEBI" id="CHEBI:18110"/>
        <dbReference type="ChEBI" id="CHEBI:29985"/>
        <dbReference type="ChEBI" id="CHEBI:57524"/>
        <dbReference type="EC" id="2.6.1.52"/>
    </reaction>
</comment>
<comment type="catalytic activity">
    <reaction evidence="1">
        <text>4-(phosphooxy)-L-threonine + 2-oxoglutarate = (R)-3-hydroxy-2-oxo-4-phosphooxybutanoate + L-glutamate</text>
        <dbReference type="Rhea" id="RHEA:16573"/>
        <dbReference type="ChEBI" id="CHEBI:16810"/>
        <dbReference type="ChEBI" id="CHEBI:29985"/>
        <dbReference type="ChEBI" id="CHEBI:58452"/>
        <dbReference type="ChEBI" id="CHEBI:58538"/>
        <dbReference type="EC" id="2.6.1.52"/>
    </reaction>
</comment>
<comment type="cofactor">
    <cofactor evidence="1">
        <name>pyridoxal 5'-phosphate</name>
        <dbReference type="ChEBI" id="CHEBI:597326"/>
    </cofactor>
    <text evidence="1">Binds 1 pyridoxal phosphate per subunit.</text>
</comment>
<comment type="pathway">
    <text evidence="1">Amino-acid biosynthesis; L-serine biosynthesis; L-serine from 3-phospho-D-glycerate: step 2/3.</text>
</comment>
<comment type="pathway">
    <text evidence="1">Cofactor biosynthesis; pyridoxine 5'-phosphate biosynthesis; pyridoxine 5'-phosphate from D-erythrose 4-phosphate: step 3/5.</text>
</comment>
<comment type="subunit">
    <text evidence="1">Homodimer.</text>
</comment>
<comment type="subcellular location">
    <subcellularLocation>
        <location evidence="1">Cytoplasm</location>
    </subcellularLocation>
</comment>
<comment type="similarity">
    <text evidence="1">Belongs to the class-V pyridoxal-phosphate-dependent aminotransferase family. SerC subfamily.</text>
</comment>
<sequence>MSQVYNFSAGPAMLPTQVLKQMQDELLEYGNTKASVMEISHRDPYFIAMAQKLEQDLRDLMGIPNHYKVLFLQGGASAQFSMVPINLLQGKTKANYAHTGHWSKKAITEGKRYCEVNICTDSSDNKYTDIDVFENWNIDPDGAYLHYTPNETIAGLEFDYVPEVDMPLVADMSSSILSREVDVSKYGVIYASAQKNIGIAGLTIVIVRENLMGNVLANQPVLFDYTTQANNDSMYNTPSTYSWYAASRVFEWLKQQGGLSAMAKINQTKAKTLYDAINGSDFYSNPVAIKYRSWMNVPFLLADESLNGFFLEKAIANNLITLKGHRSVGGMRASIYNAMPQDGINELVNFMKVFEKENT</sequence>
<dbReference type="EC" id="2.6.1.52" evidence="1"/>
<dbReference type="EMBL" id="CP000488">
    <property type="protein sequence ID" value="ABL02377.1"/>
    <property type="molecule type" value="Genomic_DNA"/>
</dbReference>
<dbReference type="RefSeq" id="WP_011738002.1">
    <property type="nucleotide sequence ID" value="NC_008610.1"/>
</dbReference>
<dbReference type="SMR" id="A1AWS0"/>
<dbReference type="STRING" id="413404.Rmag_0628"/>
<dbReference type="KEGG" id="rma:Rmag_0628"/>
<dbReference type="eggNOG" id="COG1932">
    <property type="taxonomic scope" value="Bacteria"/>
</dbReference>
<dbReference type="HOGENOM" id="CLU_034866_0_2_6"/>
<dbReference type="OrthoDB" id="9809412at2"/>
<dbReference type="UniPathway" id="UPA00135">
    <property type="reaction ID" value="UER00197"/>
</dbReference>
<dbReference type="UniPathway" id="UPA00244">
    <property type="reaction ID" value="UER00311"/>
</dbReference>
<dbReference type="Proteomes" id="UP000002587">
    <property type="component" value="Chromosome"/>
</dbReference>
<dbReference type="GO" id="GO:0005737">
    <property type="term" value="C:cytoplasm"/>
    <property type="evidence" value="ECO:0007669"/>
    <property type="project" value="UniProtKB-SubCell"/>
</dbReference>
<dbReference type="GO" id="GO:0004648">
    <property type="term" value="F:O-phospho-L-serine:2-oxoglutarate aminotransferase activity"/>
    <property type="evidence" value="ECO:0007669"/>
    <property type="project" value="UniProtKB-UniRule"/>
</dbReference>
<dbReference type="GO" id="GO:0030170">
    <property type="term" value="F:pyridoxal phosphate binding"/>
    <property type="evidence" value="ECO:0007669"/>
    <property type="project" value="UniProtKB-UniRule"/>
</dbReference>
<dbReference type="GO" id="GO:0006564">
    <property type="term" value="P:L-serine biosynthetic process"/>
    <property type="evidence" value="ECO:0007669"/>
    <property type="project" value="UniProtKB-UniRule"/>
</dbReference>
<dbReference type="GO" id="GO:0008615">
    <property type="term" value="P:pyridoxine biosynthetic process"/>
    <property type="evidence" value="ECO:0007669"/>
    <property type="project" value="UniProtKB-UniRule"/>
</dbReference>
<dbReference type="FunFam" id="3.40.640.10:FF:000010">
    <property type="entry name" value="Phosphoserine aminotransferase"/>
    <property type="match status" value="1"/>
</dbReference>
<dbReference type="FunFam" id="3.90.1150.10:FF:000006">
    <property type="entry name" value="Phosphoserine aminotransferase"/>
    <property type="match status" value="1"/>
</dbReference>
<dbReference type="Gene3D" id="3.90.1150.10">
    <property type="entry name" value="Aspartate Aminotransferase, domain 1"/>
    <property type="match status" value="1"/>
</dbReference>
<dbReference type="Gene3D" id="3.40.640.10">
    <property type="entry name" value="Type I PLP-dependent aspartate aminotransferase-like (Major domain)"/>
    <property type="match status" value="1"/>
</dbReference>
<dbReference type="HAMAP" id="MF_00160">
    <property type="entry name" value="SerC_aminotrans_5"/>
    <property type="match status" value="1"/>
</dbReference>
<dbReference type="InterPro" id="IPR000192">
    <property type="entry name" value="Aminotrans_V_dom"/>
</dbReference>
<dbReference type="InterPro" id="IPR020578">
    <property type="entry name" value="Aminotrans_V_PyrdxlP_BS"/>
</dbReference>
<dbReference type="InterPro" id="IPR022278">
    <property type="entry name" value="Pser_aminoTfrase"/>
</dbReference>
<dbReference type="InterPro" id="IPR015424">
    <property type="entry name" value="PyrdxlP-dep_Trfase"/>
</dbReference>
<dbReference type="InterPro" id="IPR015421">
    <property type="entry name" value="PyrdxlP-dep_Trfase_major"/>
</dbReference>
<dbReference type="InterPro" id="IPR015422">
    <property type="entry name" value="PyrdxlP-dep_Trfase_small"/>
</dbReference>
<dbReference type="NCBIfam" id="NF003764">
    <property type="entry name" value="PRK05355.1"/>
    <property type="match status" value="1"/>
</dbReference>
<dbReference type="NCBIfam" id="TIGR01364">
    <property type="entry name" value="serC_1"/>
    <property type="match status" value="1"/>
</dbReference>
<dbReference type="PANTHER" id="PTHR43247">
    <property type="entry name" value="PHOSPHOSERINE AMINOTRANSFERASE"/>
    <property type="match status" value="1"/>
</dbReference>
<dbReference type="PANTHER" id="PTHR43247:SF1">
    <property type="entry name" value="PHOSPHOSERINE AMINOTRANSFERASE"/>
    <property type="match status" value="1"/>
</dbReference>
<dbReference type="Pfam" id="PF00266">
    <property type="entry name" value="Aminotran_5"/>
    <property type="match status" value="1"/>
</dbReference>
<dbReference type="PIRSF" id="PIRSF000525">
    <property type="entry name" value="SerC"/>
    <property type="match status" value="1"/>
</dbReference>
<dbReference type="SUPFAM" id="SSF53383">
    <property type="entry name" value="PLP-dependent transferases"/>
    <property type="match status" value="1"/>
</dbReference>
<dbReference type="PROSITE" id="PS00595">
    <property type="entry name" value="AA_TRANSFER_CLASS_5"/>
    <property type="match status" value="1"/>
</dbReference>
<reference key="1">
    <citation type="journal article" date="2007" name="Science">
        <title>The Calyptogena magnifica chemoautotrophic symbiont genome.</title>
        <authorList>
            <person name="Newton I.L.G."/>
            <person name="Woyke T."/>
            <person name="Auchtung T.A."/>
            <person name="Dilly G.F."/>
            <person name="Dutton R.J."/>
            <person name="Fisher M.C."/>
            <person name="Fontanez K.M."/>
            <person name="Lau E."/>
            <person name="Stewart F.J."/>
            <person name="Richardson P.M."/>
            <person name="Barry K.W."/>
            <person name="Saunders E."/>
            <person name="Detter J.C."/>
            <person name="Wu D."/>
            <person name="Eisen J.A."/>
            <person name="Cavanaugh C.M."/>
        </authorList>
    </citation>
    <scope>NUCLEOTIDE SEQUENCE [LARGE SCALE GENOMIC DNA]</scope>
</reference>
<organism>
    <name type="scientific">Ruthia magnifica subsp. Calyptogena magnifica</name>
    <dbReference type="NCBI Taxonomy" id="413404"/>
    <lineage>
        <taxon>Bacteria</taxon>
        <taxon>Pseudomonadati</taxon>
        <taxon>Pseudomonadota</taxon>
        <taxon>Gammaproteobacteria</taxon>
        <taxon>Candidatus Pseudothioglobaceae</taxon>
        <taxon>Candidatus Ruthturnera</taxon>
    </lineage>
</organism>
<keyword id="KW-0028">Amino-acid biosynthesis</keyword>
<keyword id="KW-0032">Aminotransferase</keyword>
<keyword id="KW-0963">Cytoplasm</keyword>
<keyword id="KW-0663">Pyridoxal phosphate</keyword>
<keyword id="KW-0664">Pyridoxine biosynthesis</keyword>
<keyword id="KW-0718">Serine biosynthesis</keyword>
<keyword id="KW-0808">Transferase</keyword>